<evidence type="ECO:0000255" key="1">
    <source>
        <dbReference type="HAMAP-Rule" id="MF_01518"/>
    </source>
</evidence>
<proteinExistence type="inferred from homology"/>
<name>ADEC_METBU</name>
<comment type="catalytic activity">
    <reaction evidence="1">
        <text>adenine + H2O + H(+) = hypoxanthine + NH4(+)</text>
        <dbReference type="Rhea" id="RHEA:23688"/>
        <dbReference type="ChEBI" id="CHEBI:15377"/>
        <dbReference type="ChEBI" id="CHEBI:15378"/>
        <dbReference type="ChEBI" id="CHEBI:16708"/>
        <dbReference type="ChEBI" id="CHEBI:17368"/>
        <dbReference type="ChEBI" id="CHEBI:28938"/>
        <dbReference type="EC" id="3.5.4.2"/>
    </reaction>
</comment>
<comment type="cofactor">
    <cofactor evidence="1">
        <name>Mn(2+)</name>
        <dbReference type="ChEBI" id="CHEBI:29035"/>
    </cofactor>
</comment>
<comment type="similarity">
    <text evidence="1">Belongs to the metallo-dependent hydrolases superfamily. Adenine deaminase family.</text>
</comment>
<organism>
    <name type="scientific">Methanococcoides burtonii (strain DSM 6242 / NBRC 107633 / OCM 468 / ACE-M)</name>
    <dbReference type="NCBI Taxonomy" id="259564"/>
    <lineage>
        <taxon>Archaea</taxon>
        <taxon>Methanobacteriati</taxon>
        <taxon>Methanobacteriota</taxon>
        <taxon>Stenosarchaea group</taxon>
        <taxon>Methanomicrobia</taxon>
        <taxon>Methanosarcinales</taxon>
        <taxon>Methanosarcinaceae</taxon>
        <taxon>Methanococcoides</taxon>
    </lineage>
</organism>
<sequence length="584" mass="63335">MNFFMDIRDKVFAATGKVKADTIFFGGLLINVNTKEMLYRDIAVKEGYIVGIGDVSSLKGDETEMIDVTGKHLCPGLMDGHVHFESSMVTLSQFAVPALAHGTTSVVIDPHEIANVLGRGGIELVLDEAATLPLNAFVAVSSCVPATSFETAGASIDVDDIVSLIANENVVGLGEMMDYPGVVFCDETKLSMIRTALKERLVVDGHCPALSREQLFGYMCAGISTDHESIEYEEALEKLRLGMKLMIREGSAAKALDKFLPRLIGDGVSLENVFFVTDDKHPSDLLKGYMDVIVRRAIELGLSPLDAISMCTINAAKHYRVDHIVGSLSMGRKADIIVLEDLEKFIIDSVYASGRPVESFVPSYEYPDTVFNTVKFDAVTATDLQIMSDADKDHRVRVIKVVPDLIVTENETFVLHSDRHGILMPDVENDVLSVAVIERHGKNGNIGTGFIKGMGLRNGAIGQSIGHDSHNVVVTGVDHSDMALCANTIRSMNGGICVVSNGKVVEQLELPFAGLLSTLPAEEVEKKLTDLHKAVKEIGCALPAPFITHSFIALPVIPSLRLTDMGLFDVDKFSLVSPIDEVME</sequence>
<keyword id="KW-0378">Hydrolase</keyword>
<keyword id="KW-0464">Manganese</keyword>
<protein>
    <recommendedName>
        <fullName evidence="1">Adenine deaminase</fullName>
        <shortName evidence="1">Adenase</shortName>
        <shortName evidence="1">Adenine aminase</shortName>
        <ecNumber evidence="1">3.5.4.2</ecNumber>
    </recommendedName>
</protein>
<reference key="1">
    <citation type="journal article" date="2009" name="ISME J.">
        <title>The genome sequence of the psychrophilic archaeon, Methanococcoides burtonii: the role of genome evolution in cold adaptation.</title>
        <authorList>
            <person name="Allen M.A."/>
            <person name="Lauro F.M."/>
            <person name="Williams T.J."/>
            <person name="Burg D."/>
            <person name="Siddiqui K.S."/>
            <person name="De Francisci D."/>
            <person name="Chong K.W."/>
            <person name="Pilak O."/>
            <person name="Chew H.H."/>
            <person name="De Maere M.Z."/>
            <person name="Ting L."/>
            <person name="Katrib M."/>
            <person name="Ng C."/>
            <person name="Sowers K.R."/>
            <person name="Galperin M.Y."/>
            <person name="Anderson I.J."/>
            <person name="Ivanova N."/>
            <person name="Dalin E."/>
            <person name="Martinez M."/>
            <person name="Lapidus A."/>
            <person name="Hauser L."/>
            <person name="Land M."/>
            <person name="Thomas T."/>
            <person name="Cavicchioli R."/>
        </authorList>
    </citation>
    <scope>NUCLEOTIDE SEQUENCE [LARGE SCALE GENOMIC DNA]</scope>
    <source>
        <strain>DSM 6242 / NBRC 107633 / OCM 468 / ACE-M</strain>
    </source>
</reference>
<accession>Q12XX8</accession>
<feature type="chain" id="PRO_0000292402" description="Adenine deaminase">
    <location>
        <begin position="1"/>
        <end position="584"/>
    </location>
</feature>
<gene>
    <name evidence="1" type="primary">ade</name>
    <name type="ordered locus">Mbur_0733</name>
</gene>
<dbReference type="EC" id="3.5.4.2" evidence="1"/>
<dbReference type="EMBL" id="CP000300">
    <property type="protein sequence ID" value="ABE51698.1"/>
    <property type="molecule type" value="Genomic_DNA"/>
</dbReference>
<dbReference type="SMR" id="Q12XX8"/>
<dbReference type="STRING" id="259564.Mbur_0733"/>
<dbReference type="KEGG" id="mbu:Mbur_0733"/>
<dbReference type="HOGENOM" id="CLU_027935_0_0_2"/>
<dbReference type="Proteomes" id="UP000001979">
    <property type="component" value="Chromosome"/>
</dbReference>
<dbReference type="GO" id="GO:0000034">
    <property type="term" value="F:adenine deaminase activity"/>
    <property type="evidence" value="ECO:0007669"/>
    <property type="project" value="UniProtKB-UniRule"/>
</dbReference>
<dbReference type="GO" id="GO:0006146">
    <property type="term" value="P:adenine catabolic process"/>
    <property type="evidence" value="ECO:0007669"/>
    <property type="project" value="InterPro"/>
</dbReference>
<dbReference type="CDD" id="cd01295">
    <property type="entry name" value="AdeC"/>
    <property type="match status" value="1"/>
</dbReference>
<dbReference type="Gene3D" id="3.20.20.140">
    <property type="entry name" value="Metal-dependent hydrolases"/>
    <property type="match status" value="1"/>
</dbReference>
<dbReference type="Gene3D" id="2.30.40.10">
    <property type="entry name" value="Urease, subunit C, domain 1"/>
    <property type="match status" value="1"/>
</dbReference>
<dbReference type="HAMAP" id="MF_01518">
    <property type="entry name" value="Adenine_deamin"/>
    <property type="match status" value="1"/>
</dbReference>
<dbReference type="InterPro" id="IPR006679">
    <property type="entry name" value="Adenine_deam"/>
</dbReference>
<dbReference type="InterPro" id="IPR026912">
    <property type="entry name" value="Adenine_deam_C"/>
</dbReference>
<dbReference type="InterPro" id="IPR006680">
    <property type="entry name" value="Amidohydro-rel"/>
</dbReference>
<dbReference type="InterPro" id="IPR011059">
    <property type="entry name" value="Metal-dep_hydrolase_composite"/>
</dbReference>
<dbReference type="InterPro" id="IPR032466">
    <property type="entry name" value="Metal_Hydrolase"/>
</dbReference>
<dbReference type="NCBIfam" id="TIGR01178">
    <property type="entry name" value="ade"/>
    <property type="match status" value="1"/>
</dbReference>
<dbReference type="PANTHER" id="PTHR11113:SF2">
    <property type="entry name" value="ADENINE DEAMINASE"/>
    <property type="match status" value="1"/>
</dbReference>
<dbReference type="PANTHER" id="PTHR11113">
    <property type="entry name" value="N-ACETYLGLUCOSAMINE-6-PHOSPHATE DEACETYLASE"/>
    <property type="match status" value="1"/>
</dbReference>
<dbReference type="Pfam" id="PF13382">
    <property type="entry name" value="Adenine_deam_C"/>
    <property type="match status" value="1"/>
</dbReference>
<dbReference type="Pfam" id="PF01979">
    <property type="entry name" value="Amidohydro_1"/>
    <property type="match status" value="1"/>
</dbReference>
<dbReference type="SUPFAM" id="SSF51338">
    <property type="entry name" value="Composite domain of metallo-dependent hydrolases"/>
    <property type="match status" value="1"/>
</dbReference>
<dbReference type="SUPFAM" id="SSF51556">
    <property type="entry name" value="Metallo-dependent hydrolases"/>
    <property type="match status" value="1"/>
</dbReference>